<sequence length="141" mass="16334">MRQRTIVCPLIQNDGYYLLCKMADNRGVFPGQWALSGGGVEPGERIEEALRREVREELGEQLILSDITPWTFRDDIRVKTYADGRQEEIYMIYLIFDCVSANRDICINDEFQDYAWVKPEELALYDLNVATRHTLALKGLL</sequence>
<gene>
    <name evidence="1" type="primary">nudI</name>
    <name type="ordered locus">SeAg_B2431</name>
</gene>
<dbReference type="EC" id="3.6.1.9" evidence="1"/>
<dbReference type="EC" id="3.6.1.12" evidence="1"/>
<dbReference type="EC" id="3.6.1.-" evidence="1"/>
<dbReference type="EC" id="3.6.1.23" evidence="1"/>
<dbReference type="EMBL" id="CP001138">
    <property type="protein sequence ID" value="ACH50846.1"/>
    <property type="molecule type" value="Genomic_DNA"/>
</dbReference>
<dbReference type="RefSeq" id="WP_001249907.1">
    <property type="nucleotide sequence ID" value="NC_011149.1"/>
</dbReference>
<dbReference type="SMR" id="B5EZH4"/>
<dbReference type="KEGG" id="sea:SeAg_B2431"/>
<dbReference type="HOGENOM" id="CLU_037162_31_0_6"/>
<dbReference type="Proteomes" id="UP000008819">
    <property type="component" value="Chromosome"/>
</dbReference>
<dbReference type="GO" id="GO:0047840">
    <property type="term" value="F:dCTP diphosphatase activity"/>
    <property type="evidence" value="ECO:0007669"/>
    <property type="project" value="UniProtKB-EC"/>
</dbReference>
<dbReference type="GO" id="GO:0036218">
    <property type="term" value="F:dTTP diphosphatase activity"/>
    <property type="evidence" value="ECO:0007669"/>
    <property type="project" value="RHEA"/>
</dbReference>
<dbReference type="GO" id="GO:0004170">
    <property type="term" value="F:dUTP diphosphatase activity"/>
    <property type="evidence" value="ECO:0007669"/>
    <property type="project" value="UniProtKB-EC"/>
</dbReference>
<dbReference type="GO" id="GO:0000287">
    <property type="term" value="F:magnesium ion binding"/>
    <property type="evidence" value="ECO:0007669"/>
    <property type="project" value="UniProtKB-UniRule"/>
</dbReference>
<dbReference type="CDD" id="cd04696">
    <property type="entry name" value="NUDIX_NudI"/>
    <property type="match status" value="1"/>
</dbReference>
<dbReference type="Gene3D" id="3.90.79.10">
    <property type="entry name" value="Nucleoside Triphosphate Pyrophosphohydrolase"/>
    <property type="match status" value="1"/>
</dbReference>
<dbReference type="HAMAP" id="MF_01846">
    <property type="entry name" value="Nudix_NudI"/>
    <property type="match status" value="1"/>
</dbReference>
<dbReference type="InterPro" id="IPR023781">
    <property type="entry name" value="Nucleoside_triphosphatase_NudI"/>
</dbReference>
<dbReference type="InterPro" id="IPR020476">
    <property type="entry name" value="Nudix_hydrolase"/>
</dbReference>
<dbReference type="InterPro" id="IPR015797">
    <property type="entry name" value="NUDIX_hydrolase-like_dom_sf"/>
</dbReference>
<dbReference type="InterPro" id="IPR020084">
    <property type="entry name" value="NUDIX_hydrolase_CS"/>
</dbReference>
<dbReference type="InterPro" id="IPR000086">
    <property type="entry name" value="NUDIX_hydrolase_dom"/>
</dbReference>
<dbReference type="NCBIfam" id="NF012016">
    <property type="entry name" value="PRK15472.1"/>
    <property type="match status" value="1"/>
</dbReference>
<dbReference type="PANTHER" id="PTHR43046">
    <property type="entry name" value="GDP-MANNOSE MANNOSYL HYDROLASE"/>
    <property type="match status" value="1"/>
</dbReference>
<dbReference type="PANTHER" id="PTHR43046:SF14">
    <property type="entry name" value="MUTT_NUDIX FAMILY PROTEIN"/>
    <property type="match status" value="1"/>
</dbReference>
<dbReference type="Pfam" id="PF00293">
    <property type="entry name" value="NUDIX"/>
    <property type="match status" value="1"/>
</dbReference>
<dbReference type="PRINTS" id="PR00502">
    <property type="entry name" value="NUDIXFAMILY"/>
</dbReference>
<dbReference type="SUPFAM" id="SSF55811">
    <property type="entry name" value="Nudix"/>
    <property type="match status" value="1"/>
</dbReference>
<dbReference type="PROSITE" id="PS51462">
    <property type="entry name" value="NUDIX"/>
    <property type="match status" value="1"/>
</dbReference>
<dbReference type="PROSITE" id="PS00893">
    <property type="entry name" value="NUDIX_BOX"/>
    <property type="match status" value="1"/>
</dbReference>
<comment type="function">
    <text evidence="1">Catalyzes the hydrolysis of nucleoside triphosphates, with a preference for pyrimidine deoxynucleoside triphosphates (dUTP, dTTP and dCTP).</text>
</comment>
<comment type="catalytic activity">
    <reaction evidence="1">
        <text>a ribonucleoside 5'-triphosphate + H2O = a ribonucleoside 5'-phosphate + diphosphate + H(+)</text>
        <dbReference type="Rhea" id="RHEA:23996"/>
        <dbReference type="ChEBI" id="CHEBI:15377"/>
        <dbReference type="ChEBI" id="CHEBI:15378"/>
        <dbReference type="ChEBI" id="CHEBI:33019"/>
        <dbReference type="ChEBI" id="CHEBI:58043"/>
        <dbReference type="ChEBI" id="CHEBI:61557"/>
        <dbReference type="EC" id="3.6.1.9"/>
    </reaction>
</comment>
<comment type="catalytic activity">
    <reaction evidence="1">
        <text>a 2'-deoxyribonucleoside 5'-triphosphate + H2O = a 2'-deoxyribonucleoside 5'-phosphate + diphosphate + H(+)</text>
        <dbReference type="Rhea" id="RHEA:44644"/>
        <dbReference type="ChEBI" id="CHEBI:15377"/>
        <dbReference type="ChEBI" id="CHEBI:15378"/>
        <dbReference type="ChEBI" id="CHEBI:33019"/>
        <dbReference type="ChEBI" id="CHEBI:61560"/>
        <dbReference type="ChEBI" id="CHEBI:65317"/>
        <dbReference type="EC" id="3.6.1.9"/>
    </reaction>
</comment>
<comment type="catalytic activity">
    <reaction evidence="1">
        <text>dUTP + H2O = dUMP + diphosphate + H(+)</text>
        <dbReference type="Rhea" id="RHEA:10248"/>
        <dbReference type="ChEBI" id="CHEBI:15377"/>
        <dbReference type="ChEBI" id="CHEBI:15378"/>
        <dbReference type="ChEBI" id="CHEBI:33019"/>
        <dbReference type="ChEBI" id="CHEBI:61555"/>
        <dbReference type="ChEBI" id="CHEBI:246422"/>
        <dbReference type="EC" id="3.6.1.9"/>
    </reaction>
</comment>
<comment type="catalytic activity">
    <reaction evidence="1">
        <text>dUTP + H2O = dUMP + diphosphate + H(+)</text>
        <dbReference type="Rhea" id="RHEA:10248"/>
        <dbReference type="ChEBI" id="CHEBI:15377"/>
        <dbReference type="ChEBI" id="CHEBI:15378"/>
        <dbReference type="ChEBI" id="CHEBI:33019"/>
        <dbReference type="ChEBI" id="CHEBI:61555"/>
        <dbReference type="ChEBI" id="CHEBI:246422"/>
        <dbReference type="EC" id="3.6.1.23"/>
    </reaction>
</comment>
<comment type="catalytic activity">
    <reaction evidence="1">
        <text>dTTP + H2O = dTMP + diphosphate + H(+)</text>
        <dbReference type="Rhea" id="RHEA:28534"/>
        <dbReference type="ChEBI" id="CHEBI:15377"/>
        <dbReference type="ChEBI" id="CHEBI:15378"/>
        <dbReference type="ChEBI" id="CHEBI:33019"/>
        <dbReference type="ChEBI" id="CHEBI:37568"/>
        <dbReference type="ChEBI" id="CHEBI:63528"/>
        <dbReference type="EC" id="3.6.1.9"/>
    </reaction>
</comment>
<comment type="catalytic activity">
    <reaction evidence="1">
        <text>dCTP + H2O = dCMP + diphosphate + H(+)</text>
        <dbReference type="Rhea" id="RHEA:22636"/>
        <dbReference type="ChEBI" id="CHEBI:15377"/>
        <dbReference type="ChEBI" id="CHEBI:15378"/>
        <dbReference type="ChEBI" id="CHEBI:33019"/>
        <dbReference type="ChEBI" id="CHEBI:57566"/>
        <dbReference type="ChEBI" id="CHEBI:61481"/>
        <dbReference type="EC" id="3.6.1.9"/>
    </reaction>
</comment>
<comment type="catalytic activity">
    <reaction evidence="1">
        <text>dCTP + H2O = dCMP + diphosphate + H(+)</text>
        <dbReference type="Rhea" id="RHEA:22636"/>
        <dbReference type="ChEBI" id="CHEBI:15377"/>
        <dbReference type="ChEBI" id="CHEBI:15378"/>
        <dbReference type="ChEBI" id="CHEBI:33019"/>
        <dbReference type="ChEBI" id="CHEBI:57566"/>
        <dbReference type="ChEBI" id="CHEBI:61481"/>
        <dbReference type="EC" id="3.6.1.12"/>
    </reaction>
</comment>
<comment type="cofactor">
    <cofactor evidence="1">
        <name>Mg(2+)</name>
        <dbReference type="ChEBI" id="CHEBI:18420"/>
    </cofactor>
</comment>
<comment type="subunit">
    <text evidence="1">Monomer.</text>
</comment>
<comment type="similarity">
    <text evidence="1">Belongs to the Nudix hydrolase family. NudI subfamily.</text>
</comment>
<reference key="1">
    <citation type="journal article" date="2011" name="J. Bacteriol.">
        <title>Comparative genomics of 28 Salmonella enterica isolates: evidence for CRISPR-mediated adaptive sublineage evolution.</title>
        <authorList>
            <person name="Fricke W.F."/>
            <person name="Mammel M.K."/>
            <person name="McDermott P.F."/>
            <person name="Tartera C."/>
            <person name="White D.G."/>
            <person name="Leclerc J.E."/>
            <person name="Ravel J."/>
            <person name="Cebula T.A."/>
        </authorList>
    </citation>
    <scope>NUCLEOTIDE SEQUENCE [LARGE SCALE GENOMIC DNA]</scope>
    <source>
        <strain>SL483</strain>
    </source>
</reference>
<accession>B5EZH4</accession>
<evidence type="ECO:0000255" key="1">
    <source>
        <dbReference type="HAMAP-Rule" id="MF_01846"/>
    </source>
</evidence>
<feature type="chain" id="PRO_1000188486" description="Nucleoside triphosphatase NudI">
    <location>
        <begin position="1"/>
        <end position="141"/>
    </location>
</feature>
<feature type="domain" description="Nudix hydrolase" evidence="1">
    <location>
        <begin position="1"/>
        <end position="141"/>
    </location>
</feature>
<feature type="short sequence motif" description="Nudix box">
    <location>
        <begin position="38"/>
        <end position="59"/>
    </location>
</feature>
<protein>
    <recommendedName>
        <fullName evidence="1">Nucleoside triphosphatase NudI</fullName>
        <ecNumber evidence="1">3.6.1.9</ecNumber>
    </recommendedName>
    <alternativeName>
        <fullName evidence="1">Nucleotide diphosphatase NudI</fullName>
    </alternativeName>
    <alternativeName>
        <fullName evidence="1">Pyrimidine deoxynucleoside triphosphate diphosphatase</fullName>
    </alternativeName>
    <alternativeName>
        <fullName evidence="1">dCTP diphosphatase</fullName>
        <ecNumber evidence="1">3.6.1.12</ecNumber>
    </alternativeName>
    <alternativeName>
        <fullName evidence="1">dTTP diphosphatase</fullName>
        <ecNumber evidence="1">3.6.1.-</ecNumber>
    </alternativeName>
    <alternativeName>
        <fullName evidence="1">dUTP diphosphatase</fullName>
        <ecNumber evidence="1">3.6.1.23</ecNumber>
    </alternativeName>
</protein>
<proteinExistence type="inferred from homology"/>
<organism>
    <name type="scientific">Salmonella agona (strain SL483)</name>
    <dbReference type="NCBI Taxonomy" id="454166"/>
    <lineage>
        <taxon>Bacteria</taxon>
        <taxon>Pseudomonadati</taxon>
        <taxon>Pseudomonadota</taxon>
        <taxon>Gammaproteobacteria</taxon>
        <taxon>Enterobacterales</taxon>
        <taxon>Enterobacteriaceae</taxon>
        <taxon>Salmonella</taxon>
    </lineage>
</organism>
<keyword id="KW-0378">Hydrolase</keyword>
<keyword id="KW-0460">Magnesium</keyword>
<name>NUDI_SALA4</name>